<proteinExistence type="inferred from homology"/>
<gene>
    <name evidence="1" type="primary">thiI</name>
    <name type="ordered locus">LAR_0489</name>
</gene>
<organism>
    <name type="scientific">Limosilactobacillus reuteri subsp. reuteri (strain JCM 1112)</name>
    <name type="common">Lactobacillus reuteri</name>
    <dbReference type="NCBI Taxonomy" id="557433"/>
    <lineage>
        <taxon>Bacteria</taxon>
        <taxon>Bacillati</taxon>
        <taxon>Bacillota</taxon>
        <taxon>Bacilli</taxon>
        <taxon>Lactobacillales</taxon>
        <taxon>Lactobacillaceae</taxon>
        <taxon>Limosilactobacillus</taxon>
    </lineage>
</organism>
<evidence type="ECO:0000255" key="1">
    <source>
        <dbReference type="HAMAP-Rule" id="MF_00021"/>
    </source>
</evidence>
<sequence length="406" mass="45727">MQYTEIMVRYGELSTKGHNKKSFIDRLGVNVRKALHSFDQVKVHAQRDRLHVELNGADYDQVMNRLKLVFGIQNFSPSIKVDKTFEATAEAAAQMIAEQVDKPITFKVETRRSDHQFAIDTFEMNNKLGGYLLDKFPDKLKVDVHHPDLTLRVEIRLNGIFLSSETIKGAGGLPVGTAGKGMMMMSGGIDSPVAAYLGMKRGVSMEMVHFFSPPYTSPQALAKAKQLTERLAKYSGSIKFIQVPFAEIQETVKEKVPEGYLMTIQRRMMLRLAAALMIKRHGLAIFNGESLGQVASQTMESMLAINDVTSYPVLRPVLSFDKTEIIKIAQDIDTYDLSILPYEDCCTVFTPPSPKTRPNVKRAREYEKRLDIEGLMQRALDGIEITEIHPGEDYLNQNEDVFAELL</sequence>
<reference key="1">
    <citation type="journal article" date="2008" name="DNA Res.">
        <title>Comparative genome analysis of Lactobacillus reuteri and Lactobacillus fermentum reveal a genomic island for reuterin and cobalamin production.</title>
        <authorList>
            <person name="Morita H."/>
            <person name="Toh H."/>
            <person name="Fukuda S."/>
            <person name="Horikawa H."/>
            <person name="Oshima K."/>
            <person name="Suzuki T."/>
            <person name="Murakami M."/>
            <person name="Hisamatsu S."/>
            <person name="Kato Y."/>
            <person name="Takizawa T."/>
            <person name="Fukuoka H."/>
            <person name="Yoshimura T."/>
            <person name="Itoh K."/>
            <person name="O'Sullivan D.J."/>
            <person name="McKay L.L."/>
            <person name="Ohno H."/>
            <person name="Kikuchi J."/>
            <person name="Masaoka T."/>
            <person name="Hattori M."/>
        </authorList>
    </citation>
    <scope>NUCLEOTIDE SEQUENCE [LARGE SCALE GENOMIC DNA]</scope>
    <source>
        <strain>JCM 1112</strain>
    </source>
</reference>
<keyword id="KW-0067">ATP-binding</keyword>
<keyword id="KW-0963">Cytoplasm</keyword>
<keyword id="KW-0547">Nucleotide-binding</keyword>
<keyword id="KW-0694">RNA-binding</keyword>
<keyword id="KW-0784">Thiamine biosynthesis</keyword>
<keyword id="KW-0808">Transferase</keyword>
<keyword id="KW-0820">tRNA-binding</keyword>
<accession>B2G6C3</accession>
<name>THII_LIMRJ</name>
<comment type="function">
    <text evidence="1">Catalyzes the ATP-dependent transfer of a sulfur to tRNA to produce 4-thiouridine in position 8 of tRNAs, which functions as a near-UV photosensor. Also catalyzes the transfer of sulfur to the sulfur carrier protein ThiS, forming ThiS-thiocarboxylate. This is a step in the synthesis of thiazole, in the thiamine biosynthesis pathway. The sulfur is donated as persulfide by IscS.</text>
</comment>
<comment type="catalytic activity">
    <reaction evidence="1">
        <text>[ThiI sulfur-carrier protein]-S-sulfanyl-L-cysteine + a uridine in tRNA + 2 reduced [2Fe-2S]-[ferredoxin] + ATP + H(+) = [ThiI sulfur-carrier protein]-L-cysteine + a 4-thiouridine in tRNA + 2 oxidized [2Fe-2S]-[ferredoxin] + AMP + diphosphate</text>
        <dbReference type="Rhea" id="RHEA:24176"/>
        <dbReference type="Rhea" id="RHEA-COMP:10000"/>
        <dbReference type="Rhea" id="RHEA-COMP:10001"/>
        <dbReference type="Rhea" id="RHEA-COMP:13337"/>
        <dbReference type="Rhea" id="RHEA-COMP:13338"/>
        <dbReference type="Rhea" id="RHEA-COMP:13339"/>
        <dbReference type="Rhea" id="RHEA-COMP:13340"/>
        <dbReference type="ChEBI" id="CHEBI:15378"/>
        <dbReference type="ChEBI" id="CHEBI:29950"/>
        <dbReference type="ChEBI" id="CHEBI:30616"/>
        <dbReference type="ChEBI" id="CHEBI:33019"/>
        <dbReference type="ChEBI" id="CHEBI:33737"/>
        <dbReference type="ChEBI" id="CHEBI:33738"/>
        <dbReference type="ChEBI" id="CHEBI:61963"/>
        <dbReference type="ChEBI" id="CHEBI:65315"/>
        <dbReference type="ChEBI" id="CHEBI:136798"/>
        <dbReference type="ChEBI" id="CHEBI:456215"/>
        <dbReference type="EC" id="2.8.1.4"/>
    </reaction>
</comment>
<comment type="catalytic activity">
    <reaction evidence="1">
        <text>[ThiS sulfur-carrier protein]-C-terminal Gly-Gly-AMP + S-sulfanyl-L-cysteinyl-[cysteine desulfurase] + AH2 = [ThiS sulfur-carrier protein]-C-terminal-Gly-aminoethanethioate + L-cysteinyl-[cysteine desulfurase] + A + AMP + 2 H(+)</text>
        <dbReference type="Rhea" id="RHEA:43340"/>
        <dbReference type="Rhea" id="RHEA-COMP:12157"/>
        <dbReference type="Rhea" id="RHEA-COMP:12158"/>
        <dbReference type="Rhea" id="RHEA-COMP:12910"/>
        <dbReference type="Rhea" id="RHEA-COMP:19908"/>
        <dbReference type="ChEBI" id="CHEBI:13193"/>
        <dbReference type="ChEBI" id="CHEBI:15378"/>
        <dbReference type="ChEBI" id="CHEBI:17499"/>
        <dbReference type="ChEBI" id="CHEBI:29950"/>
        <dbReference type="ChEBI" id="CHEBI:61963"/>
        <dbReference type="ChEBI" id="CHEBI:90618"/>
        <dbReference type="ChEBI" id="CHEBI:232372"/>
        <dbReference type="ChEBI" id="CHEBI:456215"/>
    </reaction>
</comment>
<comment type="pathway">
    <text evidence="1">Cofactor biosynthesis; thiamine diphosphate biosynthesis.</text>
</comment>
<comment type="subcellular location">
    <subcellularLocation>
        <location evidence="1">Cytoplasm</location>
    </subcellularLocation>
</comment>
<comment type="similarity">
    <text evidence="1">Belongs to the ThiI family.</text>
</comment>
<dbReference type="EC" id="2.8.1.4" evidence="1"/>
<dbReference type="EMBL" id="AP007281">
    <property type="protein sequence ID" value="BAG25005.1"/>
    <property type="molecule type" value="Genomic_DNA"/>
</dbReference>
<dbReference type="RefSeq" id="WP_003667593.1">
    <property type="nucleotide sequence ID" value="NC_010609.1"/>
</dbReference>
<dbReference type="SMR" id="B2G6C3"/>
<dbReference type="KEGG" id="lrf:LAR_0489"/>
<dbReference type="HOGENOM" id="CLU_037952_4_0_9"/>
<dbReference type="UniPathway" id="UPA00060"/>
<dbReference type="GO" id="GO:0005829">
    <property type="term" value="C:cytosol"/>
    <property type="evidence" value="ECO:0007669"/>
    <property type="project" value="TreeGrafter"/>
</dbReference>
<dbReference type="GO" id="GO:0005524">
    <property type="term" value="F:ATP binding"/>
    <property type="evidence" value="ECO:0007669"/>
    <property type="project" value="UniProtKB-UniRule"/>
</dbReference>
<dbReference type="GO" id="GO:0004810">
    <property type="term" value="F:CCA tRNA nucleotidyltransferase activity"/>
    <property type="evidence" value="ECO:0007669"/>
    <property type="project" value="InterPro"/>
</dbReference>
<dbReference type="GO" id="GO:0000049">
    <property type="term" value="F:tRNA binding"/>
    <property type="evidence" value="ECO:0007669"/>
    <property type="project" value="UniProtKB-UniRule"/>
</dbReference>
<dbReference type="GO" id="GO:0140741">
    <property type="term" value="F:tRNA-uracil-4 sulfurtransferase activity"/>
    <property type="evidence" value="ECO:0007669"/>
    <property type="project" value="UniProtKB-EC"/>
</dbReference>
<dbReference type="GO" id="GO:0009228">
    <property type="term" value="P:thiamine biosynthetic process"/>
    <property type="evidence" value="ECO:0007669"/>
    <property type="project" value="UniProtKB-KW"/>
</dbReference>
<dbReference type="GO" id="GO:0009229">
    <property type="term" value="P:thiamine diphosphate biosynthetic process"/>
    <property type="evidence" value="ECO:0007669"/>
    <property type="project" value="UniProtKB-UniRule"/>
</dbReference>
<dbReference type="GO" id="GO:0052837">
    <property type="term" value="P:thiazole biosynthetic process"/>
    <property type="evidence" value="ECO:0007669"/>
    <property type="project" value="TreeGrafter"/>
</dbReference>
<dbReference type="GO" id="GO:0002937">
    <property type="term" value="P:tRNA 4-thiouridine biosynthesis"/>
    <property type="evidence" value="ECO:0007669"/>
    <property type="project" value="TreeGrafter"/>
</dbReference>
<dbReference type="CDD" id="cd01712">
    <property type="entry name" value="PPase_ThiI"/>
    <property type="match status" value="1"/>
</dbReference>
<dbReference type="CDD" id="cd11716">
    <property type="entry name" value="THUMP_ThiI"/>
    <property type="match status" value="1"/>
</dbReference>
<dbReference type="FunFam" id="3.40.50.620:FF:000053">
    <property type="entry name" value="Probable tRNA sulfurtransferase"/>
    <property type="match status" value="1"/>
</dbReference>
<dbReference type="Gene3D" id="3.30.2130.30">
    <property type="match status" value="1"/>
</dbReference>
<dbReference type="Gene3D" id="3.40.50.620">
    <property type="entry name" value="HUPs"/>
    <property type="match status" value="1"/>
</dbReference>
<dbReference type="HAMAP" id="MF_00021">
    <property type="entry name" value="ThiI"/>
    <property type="match status" value="1"/>
</dbReference>
<dbReference type="InterPro" id="IPR014729">
    <property type="entry name" value="Rossmann-like_a/b/a_fold"/>
</dbReference>
<dbReference type="InterPro" id="IPR020536">
    <property type="entry name" value="ThiI_AANH"/>
</dbReference>
<dbReference type="InterPro" id="IPR054173">
    <property type="entry name" value="ThiI_fer"/>
</dbReference>
<dbReference type="InterPro" id="IPR049961">
    <property type="entry name" value="ThiI_N"/>
</dbReference>
<dbReference type="InterPro" id="IPR004114">
    <property type="entry name" value="THUMP_dom"/>
</dbReference>
<dbReference type="InterPro" id="IPR049962">
    <property type="entry name" value="THUMP_ThiI"/>
</dbReference>
<dbReference type="InterPro" id="IPR003720">
    <property type="entry name" value="tRNA_STrfase"/>
</dbReference>
<dbReference type="InterPro" id="IPR050102">
    <property type="entry name" value="tRNA_sulfurtransferase_ThiI"/>
</dbReference>
<dbReference type="NCBIfam" id="TIGR00342">
    <property type="entry name" value="tRNA uracil 4-sulfurtransferase ThiI"/>
    <property type="match status" value="1"/>
</dbReference>
<dbReference type="PANTHER" id="PTHR43209">
    <property type="entry name" value="TRNA SULFURTRANSFERASE"/>
    <property type="match status" value="1"/>
</dbReference>
<dbReference type="PANTHER" id="PTHR43209:SF1">
    <property type="entry name" value="TRNA SULFURTRANSFERASE"/>
    <property type="match status" value="1"/>
</dbReference>
<dbReference type="Pfam" id="PF02568">
    <property type="entry name" value="ThiI"/>
    <property type="match status" value="1"/>
</dbReference>
<dbReference type="Pfam" id="PF22025">
    <property type="entry name" value="ThiI_fer"/>
    <property type="match status" value="1"/>
</dbReference>
<dbReference type="Pfam" id="PF02926">
    <property type="entry name" value="THUMP"/>
    <property type="match status" value="1"/>
</dbReference>
<dbReference type="SMART" id="SM00981">
    <property type="entry name" value="THUMP"/>
    <property type="match status" value="1"/>
</dbReference>
<dbReference type="SUPFAM" id="SSF52402">
    <property type="entry name" value="Adenine nucleotide alpha hydrolases-like"/>
    <property type="match status" value="1"/>
</dbReference>
<dbReference type="SUPFAM" id="SSF143437">
    <property type="entry name" value="THUMP domain-like"/>
    <property type="match status" value="1"/>
</dbReference>
<dbReference type="PROSITE" id="PS51165">
    <property type="entry name" value="THUMP"/>
    <property type="match status" value="1"/>
</dbReference>
<feature type="chain" id="PRO_1000090020" description="Probable tRNA sulfurtransferase">
    <location>
        <begin position="1"/>
        <end position="406"/>
    </location>
</feature>
<feature type="domain" description="THUMP" evidence="1">
    <location>
        <begin position="60"/>
        <end position="166"/>
    </location>
</feature>
<feature type="binding site" evidence="1">
    <location>
        <begin position="184"/>
        <end position="185"/>
    </location>
    <ligand>
        <name>ATP</name>
        <dbReference type="ChEBI" id="CHEBI:30616"/>
    </ligand>
</feature>
<feature type="binding site" evidence="1">
    <location>
        <begin position="209"/>
        <end position="210"/>
    </location>
    <ligand>
        <name>ATP</name>
        <dbReference type="ChEBI" id="CHEBI:30616"/>
    </ligand>
</feature>
<feature type="binding site" evidence="1">
    <location>
        <position position="266"/>
    </location>
    <ligand>
        <name>ATP</name>
        <dbReference type="ChEBI" id="CHEBI:30616"/>
    </ligand>
</feature>
<feature type="binding site" evidence="1">
    <location>
        <position position="288"/>
    </location>
    <ligand>
        <name>ATP</name>
        <dbReference type="ChEBI" id="CHEBI:30616"/>
    </ligand>
</feature>
<feature type="binding site" evidence="1">
    <location>
        <position position="297"/>
    </location>
    <ligand>
        <name>ATP</name>
        <dbReference type="ChEBI" id="CHEBI:30616"/>
    </ligand>
</feature>
<protein>
    <recommendedName>
        <fullName evidence="1">Probable tRNA sulfurtransferase</fullName>
        <ecNumber evidence="1">2.8.1.4</ecNumber>
    </recommendedName>
    <alternativeName>
        <fullName evidence="1">Sulfur carrier protein ThiS sulfurtransferase</fullName>
    </alternativeName>
    <alternativeName>
        <fullName evidence="1">Thiamine biosynthesis protein ThiI</fullName>
    </alternativeName>
    <alternativeName>
        <fullName evidence="1">tRNA 4-thiouridine synthase</fullName>
    </alternativeName>
</protein>